<accession>Q29MT7</accession>
<sequence>MQAPPPEHCPGVESEQAGQVSACAGCPNQSICSDPNKKREDPGKALVAAALKDVKHKLLILSGKGGVGKSTVTTLLTRYLARSYPDSNFGVLDIDICGPSQPRLMGALGENVHQSGSGWSPVGIDDNVCLMSIGFLLGSVDDAIIWRGPKKNGMIRQFLSEVDWGNLDLLLLDTPPGTSDEHLSVVSYLKDDSSPDSVHAIIVTTPQEVALLDVRKEINFCKKQQIPIVGVIENMSGFQCGHCGHSSEIFPAKTGGAAAMCAEMEVPLLGSLPLDPAIAKACDAGEDITSVKNPTTEALEGICSKIMSSFN</sequence>
<evidence type="ECO:0000250" key="1">
    <source>
        <dbReference type="UniProtKB" id="Q9VJI9"/>
    </source>
</evidence>
<evidence type="ECO:0000255" key="2">
    <source>
        <dbReference type="HAMAP-Rule" id="MF_03038"/>
    </source>
</evidence>
<name>NUBP1_DROPS</name>
<comment type="function">
    <text evidence="2">Component of the cytosolic iron-sulfur (Fe/S) protein assembly (CIA) machinery. Required for maturation of extramitochondrial Fe-S proteins. The Nubp1-Nubp2 heterotetramer forms a Fe-S scaffold complex, mediating the de novo assembly of an Fe-S cluster and its transfer to target apoproteins.</text>
</comment>
<comment type="cofactor">
    <cofactor evidence="2">
        <name>[4Fe-4S] cluster</name>
        <dbReference type="ChEBI" id="CHEBI:49883"/>
    </cofactor>
    <text evidence="2">Binds 4 [4Fe-4S] clusters per heterotetramer. Contains two stable clusters in the N-termini of Nubp1 and two labile, bridging clusters between subunits of the Nubp1-Nubp2 heterotetramer.</text>
</comment>
<comment type="subunit">
    <text evidence="2">Heterotetramer of 2 Nubp1 and 2 Nubp2 chains.</text>
</comment>
<comment type="subcellular location">
    <subcellularLocation>
        <location evidence="2">Cytoplasm</location>
    </subcellularLocation>
</comment>
<comment type="similarity">
    <text evidence="2">Belongs to the Mrp/NBP35 ATP-binding proteins family. NUBP1/NBP35 subfamily.</text>
</comment>
<protein>
    <recommendedName>
        <fullName evidence="2">Cytosolic Fe-S cluster assembly factor Nubp1 homolog</fullName>
    </recommendedName>
</protein>
<dbReference type="EMBL" id="CH379060">
    <property type="protein sequence ID" value="EAL33606.1"/>
    <property type="molecule type" value="Genomic_DNA"/>
</dbReference>
<dbReference type="RefSeq" id="XP_001356542.1">
    <property type="nucleotide sequence ID" value="XM_001356506.3"/>
</dbReference>
<dbReference type="SMR" id="Q29MT7"/>
<dbReference type="FunCoup" id="Q29MT7">
    <property type="interactions" value="837"/>
</dbReference>
<dbReference type="STRING" id="46245.Q29MT7"/>
<dbReference type="EnsemblMetazoa" id="FBtr0281653">
    <property type="protein sequence ID" value="FBpp0280091"/>
    <property type="gene ID" value="FBgn0074742"/>
</dbReference>
<dbReference type="GeneID" id="4816827"/>
<dbReference type="KEGG" id="dpo:4816827"/>
<dbReference type="CTD" id="4682"/>
<dbReference type="eggNOG" id="KOG3022">
    <property type="taxonomic scope" value="Eukaryota"/>
</dbReference>
<dbReference type="HOGENOM" id="CLU_024839_0_1_1"/>
<dbReference type="InParanoid" id="Q29MT7"/>
<dbReference type="OMA" id="VSGCPMR"/>
<dbReference type="PhylomeDB" id="Q29MT7"/>
<dbReference type="Proteomes" id="UP000001819">
    <property type="component" value="Chromosome 4"/>
</dbReference>
<dbReference type="Bgee" id="FBgn0074742">
    <property type="expression patterns" value="Expressed in male reproductive system and 2 other cell types or tissues"/>
</dbReference>
<dbReference type="GO" id="GO:0005829">
    <property type="term" value="C:cytosol"/>
    <property type="evidence" value="ECO:0000250"/>
    <property type="project" value="UniProtKB"/>
</dbReference>
<dbReference type="GO" id="GO:0051539">
    <property type="term" value="F:4 iron, 4 sulfur cluster binding"/>
    <property type="evidence" value="ECO:0007669"/>
    <property type="project" value="UniProtKB-UniRule"/>
</dbReference>
<dbReference type="GO" id="GO:0005524">
    <property type="term" value="F:ATP binding"/>
    <property type="evidence" value="ECO:0007669"/>
    <property type="project" value="UniProtKB-KW"/>
</dbReference>
<dbReference type="GO" id="GO:0140663">
    <property type="term" value="F:ATP-dependent FeS chaperone activity"/>
    <property type="evidence" value="ECO:0007669"/>
    <property type="project" value="InterPro"/>
</dbReference>
<dbReference type="GO" id="GO:0051536">
    <property type="term" value="F:iron-sulfur cluster binding"/>
    <property type="evidence" value="ECO:0000250"/>
    <property type="project" value="UniProtKB"/>
</dbReference>
<dbReference type="GO" id="GO:0046872">
    <property type="term" value="F:metal ion binding"/>
    <property type="evidence" value="ECO:0007669"/>
    <property type="project" value="UniProtKB-KW"/>
</dbReference>
<dbReference type="GO" id="GO:0016226">
    <property type="term" value="P:iron-sulfur cluster assembly"/>
    <property type="evidence" value="ECO:0000250"/>
    <property type="project" value="UniProtKB"/>
</dbReference>
<dbReference type="CDD" id="cd02037">
    <property type="entry name" value="Mrp_NBP35"/>
    <property type="match status" value="1"/>
</dbReference>
<dbReference type="FunFam" id="3.40.50.300:FF:001759">
    <property type="entry name" value="Cytosolic Fe-S cluster assembly factor NUBP1 homolog"/>
    <property type="match status" value="1"/>
</dbReference>
<dbReference type="Gene3D" id="3.40.50.300">
    <property type="entry name" value="P-loop containing nucleotide triphosphate hydrolases"/>
    <property type="match status" value="1"/>
</dbReference>
<dbReference type="HAMAP" id="MF_02040">
    <property type="entry name" value="Mrp_NBP35"/>
    <property type="match status" value="1"/>
</dbReference>
<dbReference type="HAMAP" id="MF_03038">
    <property type="entry name" value="NUBP1"/>
    <property type="match status" value="1"/>
</dbReference>
<dbReference type="InterPro" id="IPR019591">
    <property type="entry name" value="Mrp/NBP35_ATP-bd"/>
</dbReference>
<dbReference type="InterPro" id="IPR028601">
    <property type="entry name" value="NUBP1/Nbp35"/>
</dbReference>
<dbReference type="InterPro" id="IPR027417">
    <property type="entry name" value="P-loop_NTPase"/>
</dbReference>
<dbReference type="InterPro" id="IPR033756">
    <property type="entry name" value="YlxH/NBP35"/>
</dbReference>
<dbReference type="PANTHER" id="PTHR23264:SF35">
    <property type="entry name" value="CYTOSOLIC FE-S CLUSTER ASSEMBLY FACTOR NUBP1"/>
    <property type="match status" value="1"/>
</dbReference>
<dbReference type="PANTHER" id="PTHR23264">
    <property type="entry name" value="NUCLEOTIDE-BINDING PROTEIN NBP35 YEAST -RELATED"/>
    <property type="match status" value="1"/>
</dbReference>
<dbReference type="Pfam" id="PF10609">
    <property type="entry name" value="ParA"/>
    <property type="match status" value="1"/>
</dbReference>
<dbReference type="SUPFAM" id="SSF52540">
    <property type="entry name" value="P-loop containing nucleoside triphosphate hydrolases"/>
    <property type="match status" value="1"/>
</dbReference>
<feature type="chain" id="PRO_0000382607" description="Cytosolic Fe-S cluster assembly factor Nubp1 homolog">
    <location>
        <begin position="1"/>
        <end position="311"/>
    </location>
</feature>
<feature type="binding site" evidence="2">
    <location>
        <position position="9"/>
    </location>
    <ligand>
        <name>[4Fe-4S] cluster</name>
        <dbReference type="ChEBI" id="CHEBI:49883"/>
        <label>1</label>
    </ligand>
</feature>
<feature type="binding site" evidence="2">
    <location>
        <position position="23"/>
    </location>
    <ligand>
        <name>[4Fe-4S] cluster</name>
        <dbReference type="ChEBI" id="CHEBI:49883"/>
        <label>1</label>
    </ligand>
</feature>
<feature type="binding site" evidence="2">
    <location>
        <position position="26"/>
    </location>
    <ligand>
        <name>[4Fe-4S] cluster</name>
        <dbReference type="ChEBI" id="CHEBI:49883"/>
        <label>1</label>
    </ligand>
</feature>
<feature type="binding site" evidence="2">
    <location>
        <position position="32"/>
    </location>
    <ligand>
        <name>[4Fe-4S] cluster</name>
        <dbReference type="ChEBI" id="CHEBI:49883"/>
        <label>1</label>
    </ligand>
</feature>
<feature type="binding site" evidence="2">
    <location>
        <begin position="63"/>
        <end position="70"/>
    </location>
    <ligand>
        <name>ATP</name>
        <dbReference type="ChEBI" id="CHEBI:30616"/>
    </ligand>
</feature>
<feature type="binding site" evidence="2">
    <location>
        <position position="240"/>
    </location>
    <ligand>
        <name>[4Fe-4S] cluster</name>
        <dbReference type="ChEBI" id="CHEBI:49883"/>
        <label>2</label>
        <note>ligand shared with heterodimeric partner</note>
    </ligand>
</feature>
<feature type="binding site" evidence="2">
    <location>
        <position position="243"/>
    </location>
    <ligand>
        <name>[4Fe-4S] cluster</name>
        <dbReference type="ChEBI" id="CHEBI:49883"/>
        <label>2</label>
        <note>ligand shared with heterodimeric partner</note>
    </ligand>
</feature>
<proteinExistence type="inferred from homology"/>
<organism>
    <name type="scientific">Drosophila pseudoobscura pseudoobscura</name>
    <name type="common">Fruit fly</name>
    <dbReference type="NCBI Taxonomy" id="46245"/>
    <lineage>
        <taxon>Eukaryota</taxon>
        <taxon>Metazoa</taxon>
        <taxon>Ecdysozoa</taxon>
        <taxon>Arthropoda</taxon>
        <taxon>Hexapoda</taxon>
        <taxon>Insecta</taxon>
        <taxon>Pterygota</taxon>
        <taxon>Neoptera</taxon>
        <taxon>Endopterygota</taxon>
        <taxon>Diptera</taxon>
        <taxon>Brachycera</taxon>
        <taxon>Muscomorpha</taxon>
        <taxon>Ephydroidea</taxon>
        <taxon>Drosophilidae</taxon>
        <taxon>Drosophila</taxon>
        <taxon>Sophophora</taxon>
    </lineage>
</organism>
<reference key="1">
    <citation type="journal article" date="2005" name="Genome Res.">
        <title>Comparative genome sequencing of Drosophila pseudoobscura: chromosomal, gene, and cis-element evolution.</title>
        <authorList>
            <person name="Richards S."/>
            <person name="Liu Y."/>
            <person name="Bettencourt B.R."/>
            <person name="Hradecky P."/>
            <person name="Letovsky S."/>
            <person name="Nielsen R."/>
            <person name="Thornton K."/>
            <person name="Hubisz M.J."/>
            <person name="Chen R."/>
            <person name="Meisel R.P."/>
            <person name="Couronne O."/>
            <person name="Hua S."/>
            <person name="Smith M.A."/>
            <person name="Zhang P."/>
            <person name="Liu J."/>
            <person name="Bussemaker H.J."/>
            <person name="van Batenburg M.F."/>
            <person name="Howells S.L."/>
            <person name="Scherer S.E."/>
            <person name="Sodergren E."/>
            <person name="Matthews B.B."/>
            <person name="Crosby M.A."/>
            <person name="Schroeder A.J."/>
            <person name="Ortiz-Barrientos D."/>
            <person name="Rives C.M."/>
            <person name="Metzker M.L."/>
            <person name="Muzny D.M."/>
            <person name="Scott G."/>
            <person name="Steffen D."/>
            <person name="Wheeler D.A."/>
            <person name="Worley K.C."/>
            <person name="Havlak P."/>
            <person name="Durbin K.J."/>
            <person name="Egan A."/>
            <person name="Gill R."/>
            <person name="Hume J."/>
            <person name="Morgan M.B."/>
            <person name="Miner G."/>
            <person name="Hamilton C."/>
            <person name="Huang Y."/>
            <person name="Waldron L."/>
            <person name="Verduzco D."/>
            <person name="Clerc-Blankenburg K.P."/>
            <person name="Dubchak I."/>
            <person name="Noor M.A.F."/>
            <person name="Anderson W."/>
            <person name="White K.P."/>
            <person name="Clark A.G."/>
            <person name="Schaeffer S.W."/>
            <person name="Gelbart W.M."/>
            <person name="Weinstock G.M."/>
            <person name="Gibbs R.A."/>
        </authorList>
    </citation>
    <scope>NUCLEOTIDE SEQUENCE [LARGE SCALE GENOMIC DNA]</scope>
    <source>
        <strain>MV2-25 / Tucson 14011-0121.94</strain>
    </source>
</reference>
<keyword id="KW-0004">4Fe-4S</keyword>
<keyword id="KW-0067">ATP-binding</keyword>
<keyword id="KW-0963">Cytoplasm</keyword>
<keyword id="KW-0408">Iron</keyword>
<keyword id="KW-0411">Iron-sulfur</keyword>
<keyword id="KW-0479">Metal-binding</keyword>
<keyword id="KW-0547">Nucleotide-binding</keyword>
<keyword id="KW-1185">Reference proteome</keyword>
<gene>
    <name evidence="1" type="primary">Nubp1</name>
    <name type="ORF">GA14715</name>
</gene>